<name>ISPG_PHOLL</name>
<proteinExistence type="inferred from homology"/>
<accession>Q7N706</accession>
<reference key="1">
    <citation type="journal article" date="2003" name="Nat. Biotechnol.">
        <title>The genome sequence of the entomopathogenic bacterium Photorhabdus luminescens.</title>
        <authorList>
            <person name="Duchaud E."/>
            <person name="Rusniok C."/>
            <person name="Frangeul L."/>
            <person name="Buchrieser C."/>
            <person name="Givaudan A."/>
            <person name="Taourit S."/>
            <person name="Bocs S."/>
            <person name="Boursaux-Eude C."/>
            <person name="Chandler M."/>
            <person name="Charles J.-F."/>
            <person name="Dassa E."/>
            <person name="Derose R."/>
            <person name="Derzelle S."/>
            <person name="Freyssinet G."/>
            <person name="Gaudriault S."/>
            <person name="Medigue C."/>
            <person name="Lanois A."/>
            <person name="Powell K."/>
            <person name="Siguier P."/>
            <person name="Vincent R."/>
            <person name="Wingate V."/>
            <person name="Zouine M."/>
            <person name="Glaser P."/>
            <person name="Boemare N."/>
            <person name="Danchin A."/>
            <person name="Kunst F."/>
        </authorList>
    </citation>
    <scope>NUCLEOTIDE SEQUENCE [LARGE SCALE GENOMIC DNA]</scope>
    <source>
        <strain>DSM 15139 / CIP 105565 / TT01</strain>
    </source>
</reference>
<dbReference type="EC" id="1.17.7.3" evidence="1"/>
<dbReference type="EMBL" id="BX571863">
    <property type="protein sequence ID" value="CAE13669.1"/>
    <property type="molecule type" value="Genomic_DNA"/>
</dbReference>
<dbReference type="RefSeq" id="WP_011145684.1">
    <property type="nucleotide sequence ID" value="NC_005126.1"/>
</dbReference>
<dbReference type="SMR" id="Q7N706"/>
<dbReference type="STRING" id="243265.plu1376"/>
<dbReference type="GeneID" id="48847655"/>
<dbReference type="KEGG" id="plu:plu1376"/>
<dbReference type="eggNOG" id="COG0821">
    <property type="taxonomic scope" value="Bacteria"/>
</dbReference>
<dbReference type="HOGENOM" id="CLU_042258_0_0_6"/>
<dbReference type="OrthoDB" id="9803214at2"/>
<dbReference type="UniPathway" id="UPA00056">
    <property type="reaction ID" value="UER00096"/>
</dbReference>
<dbReference type="Proteomes" id="UP000002514">
    <property type="component" value="Chromosome"/>
</dbReference>
<dbReference type="GO" id="GO:0051539">
    <property type="term" value="F:4 iron, 4 sulfur cluster binding"/>
    <property type="evidence" value="ECO:0007669"/>
    <property type="project" value="UniProtKB-UniRule"/>
</dbReference>
<dbReference type="GO" id="GO:0046429">
    <property type="term" value="F:4-hydroxy-3-methylbut-2-en-1-yl diphosphate synthase activity (ferredoxin)"/>
    <property type="evidence" value="ECO:0007669"/>
    <property type="project" value="UniProtKB-UniRule"/>
</dbReference>
<dbReference type="GO" id="GO:0141197">
    <property type="term" value="F:4-hydroxy-3-methylbut-2-enyl-diphosphate synthase activity (flavodoxin)"/>
    <property type="evidence" value="ECO:0007669"/>
    <property type="project" value="UniProtKB-EC"/>
</dbReference>
<dbReference type="GO" id="GO:0005506">
    <property type="term" value="F:iron ion binding"/>
    <property type="evidence" value="ECO:0007669"/>
    <property type="project" value="InterPro"/>
</dbReference>
<dbReference type="GO" id="GO:0019288">
    <property type="term" value="P:isopentenyl diphosphate biosynthetic process, methylerythritol 4-phosphate pathway"/>
    <property type="evidence" value="ECO:0007669"/>
    <property type="project" value="UniProtKB-UniRule"/>
</dbReference>
<dbReference type="GO" id="GO:0016114">
    <property type="term" value="P:terpenoid biosynthetic process"/>
    <property type="evidence" value="ECO:0007669"/>
    <property type="project" value="InterPro"/>
</dbReference>
<dbReference type="FunFam" id="3.20.20.20:FF:000001">
    <property type="entry name" value="4-hydroxy-3-methylbut-2-en-1-yl diphosphate synthase (flavodoxin)"/>
    <property type="match status" value="1"/>
</dbReference>
<dbReference type="FunFam" id="3.30.413.10:FF:000002">
    <property type="entry name" value="4-hydroxy-3-methylbut-2-en-1-yl diphosphate synthase (flavodoxin)"/>
    <property type="match status" value="1"/>
</dbReference>
<dbReference type="Gene3D" id="3.20.20.20">
    <property type="entry name" value="Dihydropteroate synthase-like"/>
    <property type="match status" value="1"/>
</dbReference>
<dbReference type="Gene3D" id="3.30.413.10">
    <property type="entry name" value="Sulfite Reductase Hemoprotein, domain 1"/>
    <property type="match status" value="1"/>
</dbReference>
<dbReference type="HAMAP" id="MF_00159">
    <property type="entry name" value="IspG"/>
    <property type="match status" value="1"/>
</dbReference>
<dbReference type="InterPro" id="IPR011005">
    <property type="entry name" value="Dihydropteroate_synth-like_sf"/>
</dbReference>
<dbReference type="InterPro" id="IPR036849">
    <property type="entry name" value="Enolase-like_C_sf"/>
</dbReference>
<dbReference type="InterPro" id="IPR016425">
    <property type="entry name" value="IspG_bac"/>
</dbReference>
<dbReference type="InterPro" id="IPR004588">
    <property type="entry name" value="IspG_bac-typ"/>
</dbReference>
<dbReference type="InterPro" id="IPR045854">
    <property type="entry name" value="NO2/SO3_Rdtase_4Fe4S_sf"/>
</dbReference>
<dbReference type="NCBIfam" id="TIGR00612">
    <property type="entry name" value="ispG_gcpE"/>
    <property type="match status" value="1"/>
</dbReference>
<dbReference type="NCBIfam" id="NF001540">
    <property type="entry name" value="PRK00366.1"/>
    <property type="match status" value="1"/>
</dbReference>
<dbReference type="PANTHER" id="PTHR30454">
    <property type="entry name" value="4-HYDROXY-3-METHYLBUT-2-EN-1-YL DIPHOSPHATE SYNTHASE"/>
    <property type="match status" value="1"/>
</dbReference>
<dbReference type="PANTHER" id="PTHR30454:SF0">
    <property type="entry name" value="4-HYDROXY-3-METHYLBUT-2-EN-1-YL DIPHOSPHATE SYNTHASE (FERREDOXIN), CHLOROPLASTIC"/>
    <property type="match status" value="1"/>
</dbReference>
<dbReference type="Pfam" id="PF04551">
    <property type="entry name" value="GcpE"/>
    <property type="match status" value="1"/>
</dbReference>
<dbReference type="PIRSF" id="PIRSF004640">
    <property type="entry name" value="IspG"/>
    <property type="match status" value="1"/>
</dbReference>
<dbReference type="SUPFAM" id="SSF51604">
    <property type="entry name" value="Enolase C-terminal domain-like"/>
    <property type="match status" value="1"/>
</dbReference>
<dbReference type="SUPFAM" id="SSF56014">
    <property type="entry name" value="Nitrite and sulphite reductase 4Fe-4S domain-like"/>
    <property type="match status" value="1"/>
</dbReference>
<sequence length="373" mass="40549">MHNESPIKRRKSTRIYVGNVPVGDGAPIAVQSMTNTRTTDVEATVKQIKSLERVGVDIVRVSIPTMDAAEAFKLIKQQANVPLVADIHFDYRIALKVAEYGVDCLRINPGNIGNEARIREVVAAARDKNIPIRIGVNGGSLEKDIQEKYGEPTPEALLESAMRHVDILNRLNFDQFKISVKASDVFLAVGAYRLLAQEIEQPLHLGITEAGGARAGSVKSAIGLGILLSEGIGDTLRISLAADPVEEVKVGFDILKALRIRSRGINFIACPTCSRQEFDVIGTVNALEQRLEDLLTPMDVSIIGCVVNGPGEAEVSTLGVTGARTKSGFYEDGIRQKVRLDNADMIDQLEAKIRAKASMLDENKRIGISQLDK</sequence>
<keyword id="KW-0004">4Fe-4S</keyword>
<keyword id="KW-0408">Iron</keyword>
<keyword id="KW-0411">Iron-sulfur</keyword>
<keyword id="KW-0414">Isoprene biosynthesis</keyword>
<keyword id="KW-0479">Metal-binding</keyword>
<keyword id="KW-0560">Oxidoreductase</keyword>
<keyword id="KW-1185">Reference proteome</keyword>
<gene>
    <name evidence="1" type="primary">ispG</name>
    <name type="synonym">gcpE</name>
    <name type="ordered locus">plu1376</name>
</gene>
<protein>
    <recommendedName>
        <fullName evidence="1">4-hydroxy-3-methylbut-2-en-1-yl diphosphate synthase (flavodoxin)</fullName>
        <ecNumber evidence="1">1.17.7.3</ecNumber>
    </recommendedName>
    <alternativeName>
        <fullName evidence="1">1-hydroxy-2-methyl-2-(E)-butenyl 4-diphosphate synthase</fullName>
    </alternativeName>
</protein>
<comment type="function">
    <text evidence="1">Converts 2C-methyl-D-erythritol 2,4-cyclodiphosphate (ME-2,4cPP) into 1-hydroxy-2-methyl-2-(E)-butenyl 4-diphosphate.</text>
</comment>
<comment type="catalytic activity">
    <reaction evidence="1">
        <text>(2E)-4-hydroxy-3-methylbut-2-enyl diphosphate + oxidized [flavodoxin] + H2O + 2 H(+) = 2-C-methyl-D-erythritol 2,4-cyclic diphosphate + reduced [flavodoxin]</text>
        <dbReference type="Rhea" id="RHEA:43604"/>
        <dbReference type="Rhea" id="RHEA-COMP:10622"/>
        <dbReference type="Rhea" id="RHEA-COMP:10623"/>
        <dbReference type="ChEBI" id="CHEBI:15377"/>
        <dbReference type="ChEBI" id="CHEBI:15378"/>
        <dbReference type="ChEBI" id="CHEBI:57618"/>
        <dbReference type="ChEBI" id="CHEBI:58210"/>
        <dbReference type="ChEBI" id="CHEBI:58483"/>
        <dbReference type="ChEBI" id="CHEBI:128753"/>
        <dbReference type="EC" id="1.17.7.3"/>
    </reaction>
</comment>
<comment type="cofactor">
    <cofactor evidence="1">
        <name>[4Fe-4S] cluster</name>
        <dbReference type="ChEBI" id="CHEBI:49883"/>
    </cofactor>
    <text evidence="1">Binds 1 [4Fe-4S] cluster.</text>
</comment>
<comment type="pathway">
    <text evidence="1">Isoprenoid biosynthesis; isopentenyl diphosphate biosynthesis via DXP pathway; isopentenyl diphosphate from 1-deoxy-D-xylulose 5-phosphate: step 5/6.</text>
</comment>
<comment type="similarity">
    <text evidence="1">Belongs to the IspG family.</text>
</comment>
<organism>
    <name type="scientific">Photorhabdus laumondii subsp. laumondii (strain DSM 15139 / CIP 105565 / TT01)</name>
    <name type="common">Photorhabdus luminescens subsp. laumondii</name>
    <dbReference type="NCBI Taxonomy" id="243265"/>
    <lineage>
        <taxon>Bacteria</taxon>
        <taxon>Pseudomonadati</taxon>
        <taxon>Pseudomonadota</taxon>
        <taxon>Gammaproteobacteria</taxon>
        <taxon>Enterobacterales</taxon>
        <taxon>Morganellaceae</taxon>
        <taxon>Photorhabdus</taxon>
    </lineage>
</organism>
<feature type="chain" id="PRO_0000190610" description="4-hydroxy-3-methylbut-2-en-1-yl diphosphate synthase (flavodoxin)">
    <location>
        <begin position="1"/>
        <end position="373"/>
    </location>
</feature>
<feature type="binding site" evidence="1">
    <location>
        <position position="270"/>
    </location>
    <ligand>
        <name>[4Fe-4S] cluster</name>
        <dbReference type="ChEBI" id="CHEBI:49883"/>
    </ligand>
</feature>
<feature type="binding site" evidence="1">
    <location>
        <position position="273"/>
    </location>
    <ligand>
        <name>[4Fe-4S] cluster</name>
        <dbReference type="ChEBI" id="CHEBI:49883"/>
    </ligand>
</feature>
<feature type="binding site" evidence="1">
    <location>
        <position position="305"/>
    </location>
    <ligand>
        <name>[4Fe-4S] cluster</name>
        <dbReference type="ChEBI" id="CHEBI:49883"/>
    </ligand>
</feature>
<feature type="binding site" evidence="1">
    <location>
        <position position="312"/>
    </location>
    <ligand>
        <name>[4Fe-4S] cluster</name>
        <dbReference type="ChEBI" id="CHEBI:49883"/>
    </ligand>
</feature>
<evidence type="ECO:0000255" key="1">
    <source>
        <dbReference type="HAMAP-Rule" id="MF_00159"/>
    </source>
</evidence>